<comment type="function">
    <text evidence="1">Located on the platform of the 30S subunit.</text>
</comment>
<comment type="subunit">
    <text evidence="1">Part of the 30S ribosomal subunit.</text>
</comment>
<comment type="similarity">
    <text evidence="1">Belongs to the universal ribosomal protein uS11 family.</text>
</comment>
<sequence>MSEKEQKEVEAKESSGKAEERRETREKQVRGDVGIAWIYASYNNTIIHITDLSGAETIAFASGGMVAKADRDKPSPWAAMQAAARAAKIALDKGIRVVHVKIKAPGGYGPKTPGPGAGPAIRALVRAGLMVDRIEDVTPLPTDSIRKPGGRRGRRV</sequence>
<organism>
    <name type="scientific">Thermofilum pendens (strain DSM 2475 / Hrk 5)</name>
    <dbReference type="NCBI Taxonomy" id="368408"/>
    <lineage>
        <taxon>Archaea</taxon>
        <taxon>Thermoproteota</taxon>
        <taxon>Thermoprotei</taxon>
        <taxon>Thermofilales</taxon>
        <taxon>Thermofilaceae</taxon>
        <taxon>Thermofilum</taxon>
    </lineage>
</organism>
<dbReference type="EMBL" id="CP000505">
    <property type="protein sequence ID" value="ABL77667.1"/>
    <property type="molecule type" value="Genomic_DNA"/>
</dbReference>
<dbReference type="RefSeq" id="WP_011751932.1">
    <property type="nucleotide sequence ID" value="NC_008698.1"/>
</dbReference>
<dbReference type="SMR" id="A1RWT7"/>
<dbReference type="STRING" id="368408.Tpen_0257"/>
<dbReference type="EnsemblBacteria" id="ABL77667">
    <property type="protein sequence ID" value="ABL77667"/>
    <property type="gene ID" value="Tpen_0257"/>
</dbReference>
<dbReference type="GeneID" id="4601849"/>
<dbReference type="KEGG" id="tpe:Tpen_0257"/>
<dbReference type="eggNOG" id="arCOG04240">
    <property type="taxonomic scope" value="Archaea"/>
</dbReference>
<dbReference type="HOGENOM" id="CLU_072439_6_0_2"/>
<dbReference type="OrthoDB" id="12054at2157"/>
<dbReference type="Proteomes" id="UP000000641">
    <property type="component" value="Chromosome"/>
</dbReference>
<dbReference type="GO" id="GO:1990904">
    <property type="term" value="C:ribonucleoprotein complex"/>
    <property type="evidence" value="ECO:0007669"/>
    <property type="project" value="UniProtKB-KW"/>
</dbReference>
<dbReference type="GO" id="GO:0005840">
    <property type="term" value="C:ribosome"/>
    <property type="evidence" value="ECO:0007669"/>
    <property type="project" value="UniProtKB-KW"/>
</dbReference>
<dbReference type="GO" id="GO:0019843">
    <property type="term" value="F:rRNA binding"/>
    <property type="evidence" value="ECO:0007669"/>
    <property type="project" value="UniProtKB-UniRule"/>
</dbReference>
<dbReference type="GO" id="GO:0003735">
    <property type="term" value="F:structural constituent of ribosome"/>
    <property type="evidence" value="ECO:0007669"/>
    <property type="project" value="InterPro"/>
</dbReference>
<dbReference type="GO" id="GO:0006412">
    <property type="term" value="P:translation"/>
    <property type="evidence" value="ECO:0007669"/>
    <property type="project" value="UniProtKB-UniRule"/>
</dbReference>
<dbReference type="FunFam" id="3.30.420.80:FF:000018">
    <property type="entry name" value="40S ribosomal protein S14"/>
    <property type="match status" value="1"/>
</dbReference>
<dbReference type="Gene3D" id="3.30.420.80">
    <property type="entry name" value="Ribosomal protein S11"/>
    <property type="match status" value="1"/>
</dbReference>
<dbReference type="HAMAP" id="MF_01310">
    <property type="entry name" value="Ribosomal_uS11"/>
    <property type="match status" value="1"/>
</dbReference>
<dbReference type="InterPro" id="IPR001971">
    <property type="entry name" value="Ribosomal_uS11"/>
</dbReference>
<dbReference type="InterPro" id="IPR018102">
    <property type="entry name" value="Ribosomal_uS11_CS"/>
</dbReference>
<dbReference type="InterPro" id="IPR036967">
    <property type="entry name" value="Ribosomal_uS11_sf"/>
</dbReference>
<dbReference type="NCBIfam" id="NF007176">
    <property type="entry name" value="PRK09607.1"/>
    <property type="match status" value="1"/>
</dbReference>
<dbReference type="PANTHER" id="PTHR11759">
    <property type="entry name" value="40S RIBOSOMAL PROTEIN S14/30S RIBOSOMAL PROTEIN S11"/>
    <property type="match status" value="1"/>
</dbReference>
<dbReference type="Pfam" id="PF00411">
    <property type="entry name" value="Ribosomal_S11"/>
    <property type="match status" value="1"/>
</dbReference>
<dbReference type="PIRSF" id="PIRSF002131">
    <property type="entry name" value="Ribosomal_S11"/>
    <property type="match status" value="1"/>
</dbReference>
<dbReference type="SUPFAM" id="SSF53137">
    <property type="entry name" value="Translational machinery components"/>
    <property type="match status" value="1"/>
</dbReference>
<dbReference type="PROSITE" id="PS00054">
    <property type="entry name" value="RIBOSOMAL_S11"/>
    <property type="match status" value="1"/>
</dbReference>
<reference key="1">
    <citation type="journal article" date="2008" name="J. Bacteriol.">
        <title>Genome sequence of Thermofilum pendens reveals an exceptional loss of biosynthetic pathways without genome reduction.</title>
        <authorList>
            <person name="Anderson I."/>
            <person name="Rodriguez J."/>
            <person name="Susanti D."/>
            <person name="Porat I."/>
            <person name="Reich C."/>
            <person name="Ulrich L.E."/>
            <person name="Elkins J.G."/>
            <person name="Mavromatis K."/>
            <person name="Lykidis A."/>
            <person name="Kim E."/>
            <person name="Thompson L.S."/>
            <person name="Nolan M."/>
            <person name="Land M."/>
            <person name="Copeland A."/>
            <person name="Lapidus A."/>
            <person name="Lucas S."/>
            <person name="Detter C."/>
            <person name="Zhulin I.B."/>
            <person name="Olsen G.J."/>
            <person name="Whitman W."/>
            <person name="Mukhopadhyay B."/>
            <person name="Bristow J."/>
            <person name="Kyrpides N."/>
        </authorList>
    </citation>
    <scope>NUCLEOTIDE SEQUENCE [LARGE SCALE GENOMIC DNA]</scope>
    <source>
        <strain>DSM 2475 / Hrk 5</strain>
    </source>
</reference>
<keyword id="KW-1185">Reference proteome</keyword>
<keyword id="KW-0687">Ribonucleoprotein</keyword>
<keyword id="KW-0689">Ribosomal protein</keyword>
<keyword id="KW-0694">RNA-binding</keyword>
<keyword id="KW-0699">rRNA-binding</keyword>
<name>RS11_THEPD</name>
<proteinExistence type="inferred from homology"/>
<gene>
    <name evidence="1" type="primary">rps11</name>
    <name type="ordered locus">Tpen_0257</name>
</gene>
<protein>
    <recommendedName>
        <fullName evidence="1">Small ribosomal subunit protein uS11</fullName>
    </recommendedName>
    <alternativeName>
        <fullName evidence="3">30S ribosomal protein S11</fullName>
    </alternativeName>
</protein>
<feature type="chain" id="PRO_0000294906" description="Small ribosomal subunit protein uS11">
    <location>
        <begin position="1"/>
        <end position="156"/>
    </location>
</feature>
<feature type="region of interest" description="Disordered" evidence="2">
    <location>
        <begin position="1"/>
        <end position="27"/>
    </location>
</feature>
<evidence type="ECO:0000255" key="1">
    <source>
        <dbReference type="HAMAP-Rule" id="MF_01310"/>
    </source>
</evidence>
<evidence type="ECO:0000256" key="2">
    <source>
        <dbReference type="SAM" id="MobiDB-lite"/>
    </source>
</evidence>
<evidence type="ECO:0000305" key="3"/>
<accession>A1RWT7</accession>